<evidence type="ECO:0000255" key="1">
    <source>
        <dbReference type="HAMAP-Rule" id="MF_01411"/>
    </source>
</evidence>
<dbReference type="EMBL" id="AP008232">
    <property type="protein sequence ID" value="BAE73702.1"/>
    <property type="molecule type" value="Genomic_DNA"/>
</dbReference>
<dbReference type="RefSeq" id="WP_011410290.1">
    <property type="nucleotide sequence ID" value="NC_007712.1"/>
</dbReference>
<dbReference type="SMR" id="Q2NVX3"/>
<dbReference type="STRING" id="343509.SG0427"/>
<dbReference type="KEGG" id="sgl:SG0427"/>
<dbReference type="eggNOG" id="COG1452">
    <property type="taxonomic scope" value="Bacteria"/>
</dbReference>
<dbReference type="HOGENOM" id="CLU_009039_2_0_6"/>
<dbReference type="OrthoDB" id="9760225at2"/>
<dbReference type="BioCyc" id="SGLO343509:SGP1_RS03890-MONOMER"/>
<dbReference type="Proteomes" id="UP000001932">
    <property type="component" value="Chromosome"/>
</dbReference>
<dbReference type="GO" id="GO:0009279">
    <property type="term" value="C:cell outer membrane"/>
    <property type="evidence" value="ECO:0007669"/>
    <property type="project" value="UniProtKB-SubCell"/>
</dbReference>
<dbReference type="GO" id="GO:1990351">
    <property type="term" value="C:transporter complex"/>
    <property type="evidence" value="ECO:0007669"/>
    <property type="project" value="TreeGrafter"/>
</dbReference>
<dbReference type="GO" id="GO:0043165">
    <property type="term" value="P:Gram-negative-bacterium-type cell outer membrane assembly"/>
    <property type="evidence" value="ECO:0007669"/>
    <property type="project" value="UniProtKB-UniRule"/>
</dbReference>
<dbReference type="GO" id="GO:0015920">
    <property type="term" value="P:lipopolysaccharide transport"/>
    <property type="evidence" value="ECO:0007669"/>
    <property type="project" value="InterPro"/>
</dbReference>
<dbReference type="Gene3D" id="2.60.450.10">
    <property type="entry name" value="Lipopolysaccharide (LPS) transport protein A like domain"/>
    <property type="match status" value="1"/>
</dbReference>
<dbReference type="HAMAP" id="MF_01411">
    <property type="entry name" value="LPS_assembly_LptD"/>
    <property type="match status" value="1"/>
</dbReference>
<dbReference type="InterPro" id="IPR020889">
    <property type="entry name" value="LipoPS_assembly_LptD"/>
</dbReference>
<dbReference type="InterPro" id="IPR050218">
    <property type="entry name" value="LptD"/>
</dbReference>
<dbReference type="InterPro" id="IPR007543">
    <property type="entry name" value="LptD_C"/>
</dbReference>
<dbReference type="InterPro" id="IPR005653">
    <property type="entry name" value="OstA-like_N"/>
</dbReference>
<dbReference type="NCBIfam" id="NF002997">
    <property type="entry name" value="PRK03761.1"/>
    <property type="match status" value="1"/>
</dbReference>
<dbReference type="PANTHER" id="PTHR30189">
    <property type="entry name" value="LPS-ASSEMBLY PROTEIN"/>
    <property type="match status" value="1"/>
</dbReference>
<dbReference type="PANTHER" id="PTHR30189:SF1">
    <property type="entry name" value="LPS-ASSEMBLY PROTEIN LPTD"/>
    <property type="match status" value="1"/>
</dbReference>
<dbReference type="Pfam" id="PF04453">
    <property type="entry name" value="LptD"/>
    <property type="match status" value="1"/>
</dbReference>
<dbReference type="Pfam" id="PF03968">
    <property type="entry name" value="LptD_N"/>
    <property type="match status" value="1"/>
</dbReference>
<proteinExistence type="inferred from homology"/>
<gene>
    <name evidence="1" type="primary">lptD</name>
    <name type="synonym">imp</name>
    <name type="synonym">ostA</name>
    <name type="ordered locus">SG0427</name>
</gene>
<organism>
    <name type="scientific">Sodalis glossinidius (strain morsitans)</name>
    <dbReference type="NCBI Taxonomy" id="343509"/>
    <lineage>
        <taxon>Bacteria</taxon>
        <taxon>Pseudomonadati</taxon>
        <taxon>Pseudomonadota</taxon>
        <taxon>Gammaproteobacteria</taxon>
        <taxon>Enterobacterales</taxon>
        <taxon>Bruguierivoracaceae</taxon>
        <taxon>Sodalis</taxon>
    </lineage>
</organism>
<keyword id="KW-0998">Cell outer membrane</keyword>
<keyword id="KW-0472">Membrane</keyword>
<keyword id="KW-0732">Signal</keyword>
<name>LPTD_SODGM</name>
<reference key="1">
    <citation type="journal article" date="2006" name="Genome Res.">
        <title>Massive genome erosion and functional adaptations provide insights into the symbiotic lifestyle of Sodalis glossinidius in the tsetse host.</title>
        <authorList>
            <person name="Toh H."/>
            <person name="Weiss B.L."/>
            <person name="Perkin S.A.H."/>
            <person name="Yamashita A."/>
            <person name="Oshima K."/>
            <person name="Hattori M."/>
            <person name="Aksoy S."/>
        </authorList>
    </citation>
    <scope>NUCLEOTIDE SEQUENCE [LARGE SCALE GENOMIC DNA]</scope>
    <source>
        <strain>morsitans</strain>
    </source>
</reference>
<protein>
    <recommendedName>
        <fullName evidence="1">LPS-assembly protein LptD</fullName>
    </recommendedName>
</protein>
<comment type="function">
    <text evidence="1">Together with LptE, is involved in the assembly of lipopolysaccharide (LPS) at the surface of the outer membrane.</text>
</comment>
<comment type="subunit">
    <text evidence="1">Component of the lipopolysaccharide transport and assembly complex. Interacts with LptE and LptA.</text>
</comment>
<comment type="subcellular location">
    <subcellularLocation>
        <location evidence="1">Cell outer membrane</location>
    </subcellularLocation>
</comment>
<comment type="similarity">
    <text evidence="1">Belongs to the LptD family.</text>
</comment>
<sequence length="780" mass="88444">MKKRLPTLLASLIGSALYSQQALADLADQCLLGVPAYTKPLVSGDANSLPVHIQADKAAANYPEHALFSGNVYIEQGNSTLTADEVQLTQRQEQNNAPLRTATATGNVNYSSNEIKLQGPKAWSNLNTKDTDVYQGNYQIVGRQGRGDADTMKQRGDNRYTVLENGSFTSCLPGDDSWSVVGSEVIHDREEQVAEIWNARFKIGKVPVFYSPYLQIPVGDKRRSGFLIPNAKYGSNNGFEFSAPYYLNLAPNYDATIMPNYMSKRGTQIQTEFRYHTTPGEGLVEFDWLPKDRVYSSEHASDGDSDRWLLYWRHNGVMDQVWRFNVDYTKVSDSNYFDDLDSKYGSTTDGYATQKFSFGYADENWDTALSYKQFQVFDTNSSDAYRTAPQLDVTYYKNDVGPFDFKVFSQAAKFTNVNNSYPEATRLHIEPTLNLPLANRWGSLNTEAKLMATHYQQENIDEYNENTGTGRHLKGSVNRVLPQFKTDGKMVFERDMDYAPDYTQTLEPRLQYLYVPYRNQNDIGVYDSTILQTDYSGLFRDRTYSGLDRISSANQLAGGVTTRIYDDQRAERFNASVGQIYYFSRPRTGDITGTWDNYDNTGSVVWAGDSYWRISNQWGIRGGLQYDSRLNSVALGDAVLEYRRDENRILQLNYHYASPQYIEQMLSDISHTGYQQGISQVGVTGSWQLVDRWSLVGAYYYDTKANQPADQLVGLQYNTCCWAINVGYERKITGWNSTDSSSQYDNKVSFNIELRGLSSNYGLGTDKMLASGILPYQRAF</sequence>
<accession>Q2NVX3</accession>
<feature type="signal peptide" evidence="1">
    <location>
        <begin position="1"/>
        <end position="24"/>
    </location>
</feature>
<feature type="chain" id="PRO_0000281639" description="LPS-assembly protein LptD">
    <location>
        <begin position="25"/>
        <end position="780"/>
    </location>
</feature>